<feature type="chain" id="PRO_0000282215" description="UPF0060 membrane protein Bxeno_B1021">
    <location>
        <begin position="1"/>
        <end position="106"/>
    </location>
</feature>
<feature type="transmembrane region" description="Helical" evidence="1">
    <location>
        <begin position="2"/>
        <end position="22"/>
    </location>
</feature>
<feature type="transmembrane region" description="Helical" evidence="1">
    <location>
        <begin position="30"/>
        <end position="50"/>
    </location>
</feature>
<feature type="transmembrane region" description="Helical" evidence="1">
    <location>
        <begin position="58"/>
        <end position="78"/>
    </location>
</feature>
<feature type="transmembrane region" description="Helical" evidence="1">
    <location>
        <begin position="82"/>
        <end position="102"/>
    </location>
</feature>
<proteinExistence type="inferred from homology"/>
<reference key="1">
    <citation type="journal article" date="2006" name="Proc. Natl. Acad. Sci. U.S.A.">
        <title>Burkholderia xenovorans LB400 harbors a multi-replicon, 9.73-Mbp genome shaped for versatility.</title>
        <authorList>
            <person name="Chain P.S.G."/>
            <person name="Denef V.J."/>
            <person name="Konstantinidis K.T."/>
            <person name="Vergez L.M."/>
            <person name="Agullo L."/>
            <person name="Reyes V.L."/>
            <person name="Hauser L."/>
            <person name="Cordova M."/>
            <person name="Gomez L."/>
            <person name="Gonzalez M."/>
            <person name="Land M."/>
            <person name="Lao V."/>
            <person name="Larimer F."/>
            <person name="LiPuma J.J."/>
            <person name="Mahenthiralingam E."/>
            <person name="Malfatti S.A."/>
            <person name="Marx C.J."/>
            <person name="Parnell J.J."/>
            <person name="Ramette A."/>
            <person name="Richardson P."/>
            <person name="Seeger M."/>
            <person name="Smith D."/>
            <person name="Spilker T."/>
            <person name="Sul W.J."/>
            <person name="Tsoi T.V."/>
            <person name="Ulrich L.E."/>
            <person name="Zhulin I.B."/>
            <person name="Tiedje J.M."/>
        </authorList>
    </citation>
    <scope>NUCLEOTIDE SEQUENCE [LARGE SCALE GENOMIC DNA]</scope>
    <source>
        <strain>LB400</strain>
    </source>
</reference>
<gene>
    <name type="ordered locus">Bxeno_B1021</name>
    <name type="ORF">Bxe_B1996</name>
</gene>
<sequence>MKTFLLYAVTAVAEIVGCYLPWRWLKEGGSIWLLVPGALSLALFAWLLTLHGTAAGRVYAAYGGVYVAVAIAWLWCVDKVRPTLWDAAGVVFTLAGMAIIAFQPRV</sequence>
<dbReference type="EMBL" id="CP000271">
    <property type="protein sequence ID" value="ABE33989.1"/>
    <property type="molecule type" value="Genomic_DNA"/>
</dbReference>
<dbReference type="RefSeq" id="WP_011491341.1">
    <property type="nucleotide sequence ID" value="NC_007952.1"/>
</dbReference>
<dbReference type="SMR" id="Q13PK0"/>
<dbReference type="STRING" id="266265.Bxe_B1996"/>
<dbReference type="KEGG" id="bxb:DR64_7297"/>
<dbReference type="KEGG" id="bxe:Bxe_B1996"/>
<dbReference type="PATRIC" id="fig|266265.5.peg.5742"/>
<dbReference type="eggNOG" id="COG1742">
    <property type="taxonomic scope" value="Bacteria"/>
</dbReference>
<dbReference type="OrthoDB" id="123240at2"/>
<dbReference type="Proteomes" id="UP000001817">
    <property type="component" value="Chromosome 2"/>
</dbReference>
<dbReference type="GO" id="GO:0005886">
    <property type="term" value="C:plasma membrane"/>
    <property type="evidence" value="ECO:0007669"/>
    <property type="project" value="UniProtKB-SubCell"/>
</dbReference>
<dbReference type="HAMAP" id="MF_00010">
    <property type="entry name" value="UPF0060"/>
    <property type="match status" value="1"/>
</dbReference>
<dbReference type="InterPro" id="IPR003844">
    <property type="entry name" value="UPF0060"/>
</dbReference>
<dbReference type="NCBIfam" id="NF002586">
    <property type="entry name" value="PRK02237.1"/>
    <property type="match status" value="1"/>
</dbReference>
<dbReference type="PANTHER" id="PTHR36116">
    <property type="entry name" value="UPF0060 MEMBRANE PROTEIN YNFA"/>
    <property type="match status" value="1"/>
</dbReference>
<dbReference type="PANTHER" id="PTHR36116:SF1">
    <property type="entry name" value="UPF0060 MEMBRANE PROTEIN YNFA"/>
    <property type="match status" value="1"/>
</dbReference>
<dbReference type="Pfam" id="PF02694">
    <property type="entry name" value="UPF0060"/>
    <property type="match status" value="1"/>
</dbReference>
<dbReference type="SUPFAM" id="SSF103481">
    <property type="entry name" value="Multidrug resistance efflux transporter EmrE"/>
    <property type="match status" value="1"/>
</dbReference>
<accession>Q13PK0</accession>
<comment type="subcellular location">
    <subcellularLocation>
        <location evidence="1">Cell inner membrane</location>
        <topology evidence="1">Multi-pass membrane protein</topology>
    </subcellularLocation>
</comment>
<comment type="similarity">
    <text evidence="1">Belongs to the UPF0060 family.</text>
</comment>
<organism>
    <name type="scientific">Paraburkholderia xenovorans (strain LB400)</name>
    <dbReference type="NCBI Taxonomy" id="266265"/>
    <lineage>
        <taxon>Bacteria</taxon>
        <taxon>Pseudomonadati</taxon>
        <taxon>Pseudomonadota</taxon>
        <taxon>Betaproteobacteria</taxon>
        <taxon>Burkholderiales</taxon>
        <taxon>Burkholderiaceae</taxon>
        <taxon>Paraburkholderia</taxon>
    </lineage>
</organism>
<keyword id="KW-0997">Cell inner membrane</keyword>
<keyword id="KW-1003">Cell membrane</keyword>
<keyword id="KW-0472">Membrane</keyword>
<keyword id="KW-1185">Reference proteome</keyword>
<keyword id="KW-0812">Transmembrane</keyword>
<keyword id="KW-1133">Transmembrane helix</keyword>
<name>Y6021_PARXL</name>
<protein>
    <recommendedName>
        <fullName evidence="1">UPF0060 membrane protein Bxeno_B1021</fullName>
    </recommendedName>
</protein>
<evidence type="ECO:0000255" key="1">
    <source>
        <dbReference type="HAMAP-Rule" id="MF_00010"/>
    </source>
</evidence>